<organism>
    <name type="scientific">Gallus gallus</name>
    <name type="common">Chicken</name>
    <dbReference type="NCBI Taxonomy" id="9031"/>
    <lineage>
        <taxon>Eukaryota</taxon>
        <taxon>Metazoa</taxon>
        <taxon>Chordata</taxon>
        <taxon>Craniata</taxon>
        <taxon>Vertebrata</taxon>
        <taxon>Euteleostomi</taxon>
        <taxon>Archelosauria</taxon>
        <taxon>Archosauria</taxon>
        <taxon>Dinosauria</taxon>
        <taxon>Saurischia</taxon>
        <taxon>Theropoda</taxon>
        <taxon>Coelurosauria</taxon>
        <taxon>Aves</taxon>
        <taxon>Neognathae</taxon>
        <taxon>Galloanserae</taxon>
        <taxon>Galliformes</taxon>
        <taxon>Phasianidae</taxon>
        <taxon>Phasianinae</taxon>
        <taxon>Gallus</taxon>
    </lineage>
</organism>
<name>SDHB_CHICK</name>
<protein>
    <recommendedName>
        <fullName>Succinate dehydrogenase [ubiquinone] iron-sulfur subunit, mitochondrial</fullName>
        <ecNumber evidence="1">1.3.5.1</ecNumber>
    </recommendedName>
    <alternativeName>
        <fullName>Iron-sulfur subunit of complex II</fullName>
        <shortName>Ip</shortName>
    </alternativeName>
    <alternativeName>
        <fullName>Malate dehydrogenase [quinone] iron-sulfur subunit</fullName>
        <ecNumber evidence="2">1.1.5.-</ecNumber>
    </alternativeName>
</protein>
<feature type="transit peptide" description="Mitochondrion">
    <location>
        <begin position="1"/>
        <end position="38"/>
    </location>
</feature>
<feature type="chain" id="PRO_0000343800" description="Succinate dehydrogenase [ubiquinone] iron-sulfur subunit, mitochondrial">
    <location>
        <begin position="39"/>
        <end position="290"/>
    </location>
</feature>
<feature type="domain" description="2Fe-2S ferredoxin-type" evidence="3">
    <location>
        <begin position="50"/>
        <end position="143"/>
    </location>
</feature>
<feature type="domain" description="4Fe-4S ferredoxin-type" evidence="4">
    <location>
        <begin position="186"/>
        <end position="216"/>
    </location>
</feature>
<feature type="binding site" evidence="6 7 9 10">
    <location>
        <position position="103"/>
    </location>
    <ligand>
        <name>[2Fe-2S] cluster</name>
        <dbReference type="ChEBI" id="CHEBI:190135"/>
    </ligand>
</feature>
<feature type="binding site" evidence="6 7 9 10">
    <location>
        <position position="108"/>
    </location>
    <ligand>
        <name>[2Fe-2S] cluster</name>
        <dbReference type="ChEBI" id="CHEBI:190135"/>
    </ligand>
</feature>
<feature type="binding site" evidence="6 7 9 10">
    <location>
        <position position="111"/>
    </location>
    <ligand>
        <name>[2Fe-2S] cluster</name>
        <dbReference type="ChEBI" id="CHEBI:190135"/>
    </ligand>
</feature>
<feature type="binding site" evidence="6 7 9 10">
    <location>
        <position position="123"/>
    </location>
    <ligand>
        <name>[2Fe-2S] cluster</name>
        <dbReference type="ChEBI" id="CHEBI:190135"/>
    </ligand>
</feature>
<feature type="binding site" evidence="6 7 9 10">
    <location>
        <position position="196"/>
    </location>
    <ligand>
        <name>[4Fe-4S] cluster</name>
        <dbReference type="ChEBI" id="CHEBI:49883"/>
    </ligand>
</feature>
<feature type="binding site" evidence="6 7 9 10">
    <location>
        <position position="199"/>
    </location>
    <ligand>
        <name>[4Fe-4S] cluster</name>
        <dbReference type="ChEBI" id="CHEBI:49883"/>
    </ligand>
</feature>
<feature type="binding site" evidence="6 7 9 10">
    <location>
        <position position="202"/>
    </location>
    <ligand>
        <name>[4Fe-4S] cluster</name>
        <dbReference type="ChEBI" id="CHEBI:49883"/>
    </ligand>
</feature>
<feature type="binding site" evidence="6 7 9 10">
    <location>
        <position position="206"/>
    </location>
    <ligand>
        <name>[3Fe-4S] cluster</name>
        <dbReference type="ChEBI" id="CHEBI:21137"/>
    </ligand>
</feature>
<feature type="binding site" evidence="6 7">
    <location>
        <position position="211"/>
    </location>
    <ligand>
        <name>a ubiquinone</name>
        <dbReference type="ChEBI" id="CHEBI:16389"/>
        <note>ligand shared with DHSD</note>
    </ligand>
</feature>
<feature type="binding site" evidence="6 7 9 10">
    <location>
        <position position="253"/>
    </location>
    <ligand>
        <name>[3Fe-4S] cluster</name>
        <dbReference type="ChEBI" id="CHEBI:21137"/>
    </ligand>
</feature>
<feature type="binding site" evidence="6 7 9 10">
    <location>
        <position position="259"/>
    </location>
    <ligand>
        <name>[3Fe-4S] cluster</name>
        <dbReference type="ChEBI" id="CHEBI:21137"/>
    </ligand>
</feature>
<feature type="binding site" evidence="6 7 9 10">
    <location>
        <position position="263"/>
    </location>
    <ligand>
        <name>[4Fe-4S] cluster</name>
        <dbReference type="ChEBI" id="CHEBI:49883"/>
    </ligand>
</feature>
<feature type="strand" evidence="12">
    <location>
        <begin position="49"/>
        <end position="56"/>
    </location>
</feature>
<feature type="strand" evidence="12">
    <location>
        <begin position="67"/>
        <end position="74"/>
    </location>
</feature>
<feature type="helix" evidence="12">
    <location>
        <begin position="75"/>
        <end position="77"/>
    </location>
</feature>
<feature type="helix" evidence="12">
    <location>
        <begin position="82"/>
        <end position="92"/>
    </location>
</feature>
<feature type="strand" evidence="12">
    <location>
        <begin position="104"/>
        <end position="108"/>
    </location>
</feature>
<feature type="strand" evidence="12">
    <location>
        <begin position="112"/>
        <end position="115"/>
    </location>
</feature>
<feature type="strand" evidence="12">
    <location>
        <begin position="118"/>
        <end position="121"/>
    </location>
</feature>
<feature type="helix" evidence="12">
    <location>
        <begin position="122"/>
        <end position="124"/>
    </location>
</feature>
<feature type="strand" evidence="12">
    <location>
        <begin position="135"/>
        <end position="138"/>
    </location>
</feature>
<feature type="strand" evidence="11">
    <location>
        <begin position="140"/>
        <end position="142"/>
    </location>
</feature>
<feature type="strand" evidence="12">
    <location>
        <begin position="144"/>
        <end position="147"/>
    </location>
</feature>
<feature type="helix" evidence="12">
    <location>
        <begin position="154"/>
        <end position="162"/>
    </location>
</feature>
<feature type="turn" evidence="12">
    <location>
        <begin position="173"/>
        <end position="176"/>
    </location>
</feature>
<feature type="helix" evidence="12">
    <location>
        <begin position="184"/>
        <end position="188"/>
    </location>
</feature>
<feature type="turn" evidence="12">
    <location>
        <begin position="189"/>
        <end position="195"/>
    </location>
</feature>
<feature type="helix" evidence="12">
    <location>
        <begin position="203"/>
        <end position="205"/>
    </location>
</feature>
<feature type="helix" evidence="12">
    <location>
        <begin position="207"/>
        <end position="212"/>
    </location>
</feature>
<feature type="turn" evidence="12">
    <location>
        <begin position="213"/>
        <end position="215"/>
    </location>
</feature>
<feature type="helix" evidence="12">
    <location>
        <begin position="218"/>
        <end position="229"/>
    </location>
</feature>
<feature type="helix" evidence="12">
    <location>
        <begin position="237"/>
        <end position="242"/>
    </location>
</feature>
<feature type="turn" evidence="12">
    <location>
        <begin position="247"/>
        <end position="252"/>
    </location>
</feature>
<feature type="helix" evidence="12">
    <location>
        <begin position="258"/>
        <end position="262"/>
    </location>
</feature>
<feature type="helix" evidence="12">
    <location>
        <begin position="269"/>
        <end position="282"/>
    </location>
</feature>
<proteinExistence type="evidence at protein level"/>
<keyword id="KW-0001">2Fe-2S</keyword>
<keyword id="KW-0002">3D-structure</keyword>
<keyword id="KW-0003">3Fe-4S</keyword>
<keyword id="KW-0004">4Fe-4S</keyword>
<keyword id="KW-0249">Electron transport</keyword>
<keyword id="KW-0408">Iron</keyword>
<keyword id="KW-0411">Iron-sulfur</keyword>
<keyword id="KW-0472">Membrane</keyword>
<keyword id="KW-0479">Metal-binding</keyword>
<keyword id="KW-0496">Mitochondrion</keyword>
<keyword id="KW-0999">Mitochondrion inner membrane</keyword>
<keyword id="KW-0560">Oxidoreductase</keyword>
<keyword id="KW-1185">Reference proteome</keyword>
<keyword id="KW-0809">Transit peptide</keyword>
<keyword id="KW-0813">Transport</keyword>
<keyword id="KW-0816">Tricarboxylic acid cycle</keyword>
<sequence length="290" mass="32597">MAAAVVGVSLRRGVPARFLRAGLRPVRGLEAVHGICRGAQTAAAATSRIKKFSIYRWDPDKPGDKPRMQTYEVDLNKCGPMVLDALIKIKNELDSTLTFRRSCREGICGSCAMNIAGGNTLACTKKIDPDLSKTTKIYPLPHMYVVKDLVPDLSNFYAQYKSIEPYLKKKDESKQGKEQYLQSIEDRQKLDGLYECILCACCSTSCPSYWWNGDKYLGPAVLMQAYRWMIDSRDDYTEERLAQLQDPFSLYRCHTIMNCTRTCPKGLNPGKAIAEIKKMMATYKEKAAAA</sequence>
<accession>Q9YHT2</accession>
<evidence type="ECO:0000250" key="1">
    <source>
        <dbReference type="UniProtKB" id="P21912"/>
    </source>
</evidence>
<evidence type="ECO:0000250" key="2">
    <source>
        <dbReference type="UniProtKB" id="Q3T189"/>
    </source>
</evidence>
<evidence type="ECO:0000255" key="3">
    <source>
        <dbReference type="PROSITE-ProRule" id="PRU00465"/>
    </source>
</evidence>
<evidence type="ECO:0000255" key="4">
    <source>
        <dbReference type="PROSITE-ProRule" id="PRU00711"/>
    </source>
</evidence>
<evidence type="ECO:0000269" key="5">
    <source>
    </source>
</evidence>
<evidence type="ECO:0000269" key="6">
    <source>
    </source>
</evidence>
<evidence type="ECO:0000269" key="7">
    <source>
    </source>
</evidence>
<evidence type="ECO:0000305" key="8"/>
<evidence type="ECO:0007744" key="9">
    <source>
        <dbReference type="PDB" id="1YQ3"/>
    </source>
</evidence>
<evidence type="ECO:0007744" key="10">
    <source>
        <dbReference type="PDB" id="2H88"/>
    </source>
</evidence>
<evidence type="ECO:0007829" key="11">
    <source>
        <dbReference type="PDB" id="1YQ4"/>
    </source>
</evidence>
<evidence type="ECO:0007829" key="12">
    <source>
        <dbReference type="PDB" id="2H88"/>
    </source>
</evidence>
<reference key="1">
    <citation type="submission" date="1998-10" db="EMBL/GenBank/DDBJ databases">
        <title>OXPHOS genes in mammals and the molecular clock.</title>
        <authorList>
            <person name="Weinreich D.M."/>
        </authorList>
    </citation>
    <scope>NUCLEOTIDE SEQUENCE [MRNA]</scope>
    <source>
        <tissue>Heart</tissue>
    </source>
</reference>
<reference key="2">
    <citation type="journal article" date="2005" name="Acta Crystallogr. D">
        <title>Crystallization of mitochondrial respiratory complex II from chicken heart: a membrane-protein complex diffracting to 2.0 A.</title>
        <authorList>
            <person name="Huang L.-S."/>
            <person name="Borders T.M."/>
            <person name="Shen J.T."/>
            <person name="Wang C.-J."/>
            <person name="Berry E.A."/>
        </authorList>
    </citation>
    <scope>X-RAY CRYSTALLOGRAPHY (2.0 ANGSTROMS) OF 39-290</scope>
    <scope>SUBUNIT</scope>
    <scope>SUBCELLULAR LOCATION</scope>
</reference>
<reference key="3">
    <citation type="journal article" date="2006" name="Biochim. Biophys. Acta">
        <title>Crystallographic studies of the binding of ligands to the dicarboxylate site of complex II, and the identity of the ligand in the 'oxaloacetate-inhibited' state.</title>
        <authorList>
            <person name="Huang L.-S."/>
            <person name="Shen J.T."/>
            <person name="Wang A.C."/>
            <person name="Berry E.A."/>
        </authorList>
    </citation>
    <scope>X-RAY CRYSTALLOGRAPHY (1.74 ANGSTROMS) OF 39-290 IN COMPLEX WITH UBIQUINONE AND IRON-SULFUR CENTERS</scope>
    <scope>SUBUNIT</scope>
    <scope>SUBCELLULAR LOCATION</scope>
    <scope>COFACTOR</scope>
    <scope>IRON-SULFUR-BINDING</scope>
</reference>
<reference key="4">
    <citation type="journal article" date="2006" name="J. Biol. Chem.">
        <title>3-nitropropionic acid is a suicide inhibitor of mitochondrial respiration that, upon oxidation by complex II, forms a covalent adduct with a catalytic base arginine in the active site of the enzyme.</title>
        <authorList>
            <person name="Huang L.-S."/>
            <person name="Sun G."/>
            <person name="Cobessi D."/>
            <person name="Wang A.C."/>
            <person name="Shen J.T."/>
            <person name="Tung E.Y."/>
            <person name="Anderson V.E."/>
            <person name="Berry E.A."/>
        </authorList>
    </citation>
    <scope>X-RAY CRYSTALLOGRAPHY (2.2 ANGSTROMS) OF 39-290 IN COMPLEX WITH UBIQUINONE AND IRON-SULFUR CENTERS</scope>
    <scope>SUBUNIT</scope>
    <scope>SUBCELLULAR LOCATION</scope>
    <scope>COFACTOR</scope>
    <scope>IRON-SULFUR-BINDING</scope>
    <scope>FUNCTION</scope>
    <scope>PATHWAY</scope>
</reference>
<comment type="function">
    <text evidence="2 6">Iron-sulfur protein (IP) subunit of the succinate dehydrogenase complex (mitochondrial respiratory chain complex II), responsible for transferring electrons from succinate to ubiquinone (coenzyme Q) (PubMed:16371358). SDH also oxidizes malate to the non-canonical enol form of oxaloacetate, enol-oxaloacetate. Enol-oxaloacetate, which is a potent inhibitor of the succinate dehydrogenase activity, is further isomerized into keto-oxaloacetate (By similarity).</text>
</comment>
<comment type="catalytic activity">
    <reaction evidence="1">
        <text>a quinone + succinate = fumarate + a quinol</text>
        <dbReference type="Rhea" id="RHEA:40523"/>
        <dbReference type="ChEBI" id="CHEBI:24646"/>
        <dbReference type="ChEBI" id="CHEBI:29806"/>
        <dbReference type="ChEBI" id="CHEBI:30031"/>
        <dbReference type="ChEBI" id="CHEBI:132124"/>
        <dbReference type="EC" id="1.3.5.1"/>
    </reaction>
</comment>
<comment type="catalytic activity">
    <reaction evidence="2">
        <text>(R)-malate + a quinone = enol-oxaloacetate + a quinol</text>
        <dbReference type="Rhea" id="RHEA:79827"/>
        <dbReference type="ChEBI" id="CHEBI:15588"/>
        <dbReference type="ChEBI" id="CHEBI:17479"/>
        <dbReference type="ChEBI" id="CHEBI:24646"/>
        <dbReference type="ChEBI" id="CHEBI:132124"/>
    </reaction>
    <physiologicalReaction direction="left-to-right" evidence="2">
        <dbReference type="Rhea" id="RHEA:79828"/>
    </physiologicalReaction>
</comment>
<comment type="catalytic activity">
    <reaction evidence="2">
        <text>(S)-malate + a quinone = enol-oxaloacetate + a quinol</text>
        <dbReference type="Rhea" id="RHEA:79831"/>
        <dbReference type="ChEBI" id="CHEBI:15589"/>
        <dbReference type="ChEBI" id="CHEBI:17479"/>
        <dbReference type="ChEBI" id="CHEBI:24646"/>
        <dbReference type="ChEBI" id="CHEBI:132124"/>
    </reaction>
    <physiologicalReaction direction="left-to-right" evidence="2">
        <dbReference type="Rhea" id="RHEA:79832"/>
    </physiologicalReaction>
</comment>
<comment type="cofactor">
    <cofactor>
        <name>[2Fe-2S] cluster</name>
        <dbReference type="ChEBI" id="CHEBI:190135"/>
    </cofactor>
    <text evidence="6 7">Binds 1 [2Fe-2S] cluster.</text>
</comment>
<comment type="cofactor">
    <cofactor>
        <name>[3Fe-4S] cluster</name>
        <dbReference type="ChEBI" id="CHEBI:21137"/>
    </cofactor>
    <text evidence="6 7">Binds 1 [3Fe-4S] cluster.</text>
</comment>
<comment type="cofactor">
    <cofactor>
        <name>[4Fe-4S] cluster</name>
        <dbReference type="ChEBI" id="CHEBI:49883"/>
    </cofactor>
    <text evidence="6 7">Binds 1 [4Fe-4S] cluster.</text>
</comment>
<comment type="activity regulation">
    <text evidence="2">Enol-oxaloacetate inhibits the succinate dehydrogenase activity.</text>
</comment>
<comment type="pathway">
    <text evidence="6">Carbohydrate metabolism; tricarboxylic acid cycle; fumarate from succinate (eukaryal route): step 1/1.</text>
</comment>
<comment type="subunit">
    <text evidence="5 6 7">Component of complex II composed of four subunits: the flavoprotein (FP) SDHA, iron-sulfur protein (IP) SDHB, and a cytochrome b560 composed of SDHC and SDHD.</text>
</comment>
<comment type="subcellular location">
    <subcellularLocation>
        <location evidence="5 6 7">Mitochondrion inner membrane</location>
        <topology evidence="5 6 7">Peripheral membrane protein</topology>
        <orientation evidence="5 6 7">Matrix side</orientation>
    </subcellularLocation>
</comment>
<comment type="similarity">
    <text evidence="8">Belongs to the succinate dehydrogenase/fumarate reductase iron-sulfur protein family.</text>
</comment>
<dbReference type="EC" id="1.3.5.1" evidence="1"/>
<dbReference type="EC" id="1.1.5.-" evidence="2"/>
<dbReference type="EMBL" id="AF095937">
    <property type="protein sequence ID" value="AAC72372.1"/>
    <property type="molecule type" value="mRNA"/>
</dbReference>
<dbReference type="PDB" id="1YQ3">
    <property type="method" value="X-ray"/>
    <property type="resolution" value="2.20 A"/>
    <property type="chains" value="B=39-290"/>
</dbReference>
<dbReference type="PDB" id="1YQ4">
    <property type="method" value="X-ray"/>
    <property type="resolution" value="2.33 A"/>
    <property type="chains" value="B=39-290"/>
</dbReference>
<dbReference type="PDB" id="2FBW">
    <property type="method" value="X-ray"/>
    <property type="resolution" value="2.10 A"/>
    <property type="chains" value="B/O=39-290"/>
</dbReference>
<dbReference type="PDB" id="2H88">
    <property type="method" value="X-ray"/>
    <property type="resolution" value="1.74 A"/>
    <property type="chains" value="B/O=39-290"/>
</dbReference>
<dbReference type="PDB" id="2H89">
    <property type="method" value="X-ray"/>
    <property type="resolution" value="2.40 A"/>
    <property type="chains" value="B=39-290"/>
</dbReference>
<dbReference type="PDB" id="2WQY">
    <property type="method" value="X-ray"/>
    <property type="resolution" value="2.10 A"/>
    <property type="chains" value="B/O=39-290"/>
</dbReference>
<dbReference type="PDB" id="6MYO">
    <property type="method" value="X-ray"/>
    <property type="resolution" value="2.20 A"/>
    <property type="chains" value="B=39-290"/>
</dbReference>
<dbReference type="PDB" id="6MYP">
    <property type="method" value="X-ray"/>
    <property type="resolution" value="2.10 A"/>
    <property type="chains" value="B=39-290"/>
</dbReference>
<dbReference type="PDB" id="6MYQ">
    <property type="method" value="X-ray"/>
    <property type="resolution" value="1.97 A"/>
    <property type="chains" value="B=39-290"/>
</dbReference>
<dbReference type="PDB" id="6MYR">
    <property type="method" value="X-ray"/>
    <property type="resolution" value="2.15 A"/>
    <property type="chains" value="B=39-290"/>
</dbReference>
<dbReference type="PDB" id="6MYS">
    <property type="method" value="X-ray"/>
    <property type="resolution" value="2.37 A"/>
    <property type="chains" value="B=39-290"/>
</dbReference>
<dbReference type="PDB" id="6MYT">
    <property type="method" value="X-ray"/>
    <property type="resolution" value="2.27 A"/>
    <property type="chains" value="B=39-290"/>
</dbReference>
<dbReference type="PDB" id="6MYU">
    <property type="method" value="X-ray"/>
    <property type="resolution" value="1.97 A"/>
    <property type="chains" value="B=39-290"/>
</dbReference>
<dbReference type="PDBsum" id="1YQ3"/>
<dbReference type="PDBsum" id="1YQ4"/>
<dbReference type="PDBsum" id="2FBW"/>
<dbReference type="PDBsum" id="2H88"/>
<dbReference type="PDBsum" id="2H89"/>
<dbReference type="PDBsum" id="2WQY"/>
<dbReference type="PDBsum" id="6MYO"/>
<dbReference type="PDBsum" id="6MYP"/>
<dbReference type="PDBsum" id="6MYQ"/>
<dbReference type="PDBsum" id="6MYR"/>
<dbReference type="PDBsum" id="6MYS"/>
<dbReference type="PDBsum" id="6MYT"/>
<dbReference type="PDBsum" id="6MYU"/>
<dbReference type="SMR" id="Q9YHT2"/>
<dbReference type="FunCoup" id="Q9YHT2">
    <property type="interactions" value="2595"/>
</dbReference>
<dbReference type="STRING" id="9031.ENSGALP00000052583"/>
<dbReference type="PaxDb" id="9031-ENSGALP00000000693"/>
<dbReference type="VEuPathDB" id="HostDB:geneid_100859720"/>
<dbReference type="eggNOG" id="KOG3049">
    <property type="taxonomic scope" value="Eukaryota"/>
</dbReference>
<dbReference type="InParanoid" id="Q9YHT2"/>
<dbReference type="OrthoDB" id="1696654at2759"/>
<dbReference type="PhylomeDB" id="Q9YHT2"/>
<dbReference type="Reactome" id="R-GGA-372987">
    <property type="pathway name" value="The tricarboxylic acid cycle"/>
</dbReference>
<dbReference type="UniPathway" id="UPA00223">
    <property type="reaction ID" value="UER01006"/>
</dbReference>
<dbReference type="EvolutionaryTrace" id="Q9YHT2"/>
<dbReference type="Proteomes" id="UP000000539">
    <property type="component" value="Unassembled WGS sequence"/>
</dbReference>
<dbReference type="GO" id="GO:0005743">
    <property type="term" value="C:mitochondrial inner membrane"/>
    <property type="evidence" value="ECO:0000250"/>
    <property type="project" value="UniProtKB"/>
</dbReference>
<dbReference type="GO" id="GO:0031966">
    <property type="term" value="C:mitochondrial membrane"/>
    <property type="evidence" value="ECO:0000318"/>
    <property type="project" value="GO_Central"/>
</dbReference>
<dbReference type="GO" id="GO:0045273">
    <property type="term" value="C:respiratory chain complex II (succinate dehydrogenase)"/>
    <property type="evidence" value="ECO:0000250"/>
    <property type="project" value="UniProtKB"/>
</dbReference>
<dbReference type="GO" id="GO:0051537">
    <property type="term" value="F:2 iron, 2 sulfur cluster binding"/>
    <property type="evidence" value="ECO:0000250"/>
    <property type="project" value="UniProtKB"/>
</dbReference>
<dbReference type="GO" id="GO:0051538">
    <property type="term" value="F:3 iron, 4 sulfur cluster binding"/>
    <property type="evidence" value="ECO:0000250"/>
    <property type="project" value="UniProtKB"/>
</dbReference>
<dbReference type="GO" id="GO:0051539">
    <property type="term" value="F:4 iron, 4 sulfur cluster binding"/>
    <property type="evidence" value="ECO:0000250"/>
    <property type="project" value="UniProtKB"/>
</dbReference>
<dbReference type="GO" id="GO:0009055">
    <property type="term" value="F:electron transfer activity"/>
    <property type="evidence" value="ECO:0007669"/>
    <property type="project" value="InterPro"/>
</dbReference>
<dbReference type="GO" id="GO:0046872">
    <property type="term" value="F:metal ion binding"/>
    <property type="evidence" value="ECO:0007669"/>
    <property type="project" value="UniProtKB-KW"/>
</dbReference>
<dbReference type="GO" id="GO:0008177">
    <property type="term" value="F:succinate dehydrogenase (quinone) activity"/>
    <property type="evidence" value="ECO:0000250"/>
    <property type="project" value="UniProtKB"/>
</dbReference>
<dbReference type="GO" id="GO:0048039">
    <property type="term" value="F:ubiquinone binding"/>
    <property type="evidence" value="ECO:0000250"/>
    <property type="project" value="UniProtKB"/>
</dbReference>
<dbReference type="GO" id="GO:0009060">
    <property type="term" value="P:aerobic respiration"/>
    <property type="evidence" value="ECO:0000318"/>
    <property type="project" value="GO_Central"/>
</dbReference>
<dbReference type="GO" id="GO:0022904">
    <property type="term" value="P:respiratory electron transport chain"/>
    <property type="evidence" value="ECO:0000318"/>
    <property type="project" value="GO_Central"/>
</dbReference>
<dbReference type="GO" id="GO:0006099">
    <property type="term" value="P:tricarboxylic acid cycle"/>
    <property type="evidence" value="ECO:0007669"/>
    <property type="project" value="UniProtKB-UniPathway"/>
</dbReference>
<dbReference type="FunFam" id="1.10.1060.10:FF:000029">
    <property type="entry name" value="Succinate dehydrogenase [ubiquinone] iron-sulfur subunit, mitochondrial"/>
    <property type="match status" value="1"/>
</dbReference>
<dbReference type="FunFam" id="3.10.20.30:FF:000007">
    <property type="entry name" value="Succinate dehydrogenase [ubiquinone] iron-sulfur subunit, mitochondrial"/>
    <property type="match status" value="1"/>
</dbReference>
<dbReference type="Gene3D" id="3.10.20.30">
    <property type="match status" value="1"/>
</dbReference>
<dbReference type="Gene3D" id="1.10.1060.10">
    <property type="entry name" value="Alpha-helical ferredoxin"/>
    <property type="match status" value="1"/>
</dbReference>
<dbReference type="InterPro" id="IPR036010">
    <property type="entry name" value="2Fe-2S_ferredoxin-like_sf"/>
</dbReference>
<dbReference type="InterPro" id="IPR001041">
    <property type="entry name" value="2Fe-2S_ferredoxin-type"/>
</dbReference>
<dbReference type="InterPro" id="IPR006058">
    <property type="entry name" value="2Fe2S_fd_BS"/>
</dbReference>
<dbReference type="InterPro" id="IPR017896">
    <property type="entry name" value="4Fe4S_Fe-S-bd"/>
</dbReference>
<dbReference type="InterPro" id="IPR017900">
    <property type="entry name" value="4Fe4S_Fe_S_CS"/>
</dbReference>
<dbReference type="InterPro" id="IPR012675">
    <property type="entry name" value="Beta-grasp_dom_sf"/>
</dbReference>
<dbReference type="InterPro" id="IPR009051">
    <property type="entry name" value="Helical_ferredxn"/>
</dbReference>
<dbReference type="InterPro" id="IPR050573">
    <property type="entry name" value="SDH/FRD_Iron-Sulfur"/>
</dbReference>
<dbReference type="InterPro" id="IPR004489">
    <property type="entry name" value="Succ_DH/fum_Rdtase_Fe-S"/>
</dbReference>
<dbReference type="InterPro" id="IPR025192">
    <property type="entry name" value="Succ_DH/fum_Rdtase_N"/>
</dbReference>
<dbReference type="NCBIfam" id="TIGR00384">
    <property type="entry name" value="dhsB"/>
    <property type="match status" value="1"/>
</dbReference>
<dbReference type="NCBIfam" id="NF004616">
    <property type="entry name" value="PRK05950.1"/>
    <property type="match status" value="1"/>
</dbReference>
<dbReference type="PANTHER" id="PTHR11921:SF29">
    <property type="entry name" value="SUCCINATE DEHYDROGENASE [UBIQUINONE] IRON-SULFUR SUBUNIT, MITOCHONDRIAL"/>
    <property type="match status" value="1"/>
</dbReference>
<dbReference type="PANTHER" id="PTHR11921">
    <property type="entry name" value="SUCCINATE DEHYDROGENASE IRON-SULFUR PROTEIN"/>
    <property type="match status" value="1"/>
</dbReference>
<dbReference type="Pfam" id="PF13085">
    <property type="entry name" value="Fer2_3"/>
    <property type="match status" value="1"/>
</dbReference>
<dbReference type="Pfam" id="PF13534">
    <property type="entry name" value="Fer4_17"/>
    <property type="match status" value="1"/>
</dbReference>
<dbReference type="SUPFAM" id="SSF54292">
    <property type="entry name" value="2Fe-2S ferredoxin-like"/>
    <property type="match status" value="1"/>
</dbReference>
<dbReference type="SUPFAM" id="SSF46548">
    <property type="entry name" value="alpha-helical ferredoxin"/>
    <property type="match status" value="1"/>
</dbReference>
<dbReference type="PROSITE" id="PS00197">
    <property type="entry name" value="2FE2S_FER_1"/>
    <property type="match status" value="1"/>
</dbReference>
<dbReference type="PROSITE" id="PS51085">
    <property type="entry name" value="2FE2S_FER_2"/>
    <property type="match status" value="1"/>
</dbReference>
<dbReference type="PROSITE" id="PS00198">
    <property type="entry name" value="4FE4S_FER_1"/>
    <property type="match status" value="1"/>
</dbReference>
<dbReference type="PROSITE" id="PS51379">
    <property type="entry name" value="4FE4S_FER_2"/>
    <property type="match status" value="1"/>
</dbReference>
<gene>
    <name type="primary">SDHB</name>
</gene>